<comment type="function">
    <text evidence="1">ATP-dependent RNA helicase involved in mRNA turnover, and more specifically in mRNA decapping. Is involved in G1/S DNA-damage checkpoint recovery, probably through the regulation of the translational status of a subset of mRNAs. May also have a role in translation and mRNA nuclear export (By similarity).</text>
</comment>
<comment type="catalytic activity">
    <reaction>
        <text>ATP + H2O = ADP + phosphate + H(+)</text>
        <dbReference type="Rhea" id="RHEA:13065"/>
        <dbReference type="ChEBI" id="CHEBI:15377"/>
        <dbReference type="ChEBI" id="CHEBI:15378"/>
        <dbReference type="ChEBI" id="CHEBI:30616"/>
        <dbReference type="ChEBI" id="CHEBI:43474"/>
        <dbReference type="ChEBI" id="CHEBI:456216"/>
        <dbReference type="EC" id="3.6.4.13"/>
    </reaction>
</comment>
<comment type="subcellular location">
    <subcellularLocation>
        <location evidence="1">Cytoplasm</location>
        <location evidence="1">P-body</location>
    </subcellularLocation>
    <text evidence="1">Is concentrated in several cytoplasmic foci called P bodies (or cytoplasmic processing bodies) which represent sites of mRNA decapping and 5' to 3' exonucleotidic decay.</text>
</comment>
<comment type="domain">
    <text>The Q motif is unique to and characteristic of the DEAD box family of RNA helicases and controls ATP binding and hydrolysis.</text>
</comment>
<comment type="similarity">
    <text evidence="5">Belongs to the DEAD box helicase family. DDX6/DHH1 subfamily.</text>
</comment>
<gene>
    <name type="primary">dhh1</name>
    <name type="ORF">ATEG_08993</name>
</gene>
<name>DHH1_ASPTN</name>
<keyword id="KW-0067">ATP-binding</keyword>
<keyword id="KW-0963">Cytoplasm</keyword>
<keyword id="KW-0347">Helicase</keyword>
<keyword id="KW-0378">Hydrolase</keyword>
<keyword id="KW-0507">mRNA processing</keyword>
<keyword id="KW-0509">mRNA transport</keyword>
<keyword id="KW-0547">Nucleotide-binding</keyword>
<keyword id="KW-1185">Reference proteome</keyword>
<keyword id="KW-0694">RNA-binding</keyword>
<keyword id="KW-0810">Translation regulation</keyword>
<keyword id="KW-0813">Transport</keyword>
<evidence type="ECO:0000250" key="1"/>
<evidence type="ECO:0000255" key="2">
    <source>
        <dbReference type="PROSITE-ProRule" id="PRU00541"/>
    </source>
</evidence>
<evidence type="ECO:0000255" key="3">
    <source>
        <dbReference type="PROSITE-ProRule" id="PRU00542"/>
    </source>
</evidence>
<evidence type="ECO:0000256" key="4">
    <source>
        <dbReference type="SAM" id="MobiDB-lite"/>
    </source>
</evidence>
<evidence type="ECO:0000305" key="5"/>
<sequence length="509" mass="57103">MADALASQLNNTSLGDANSDAKWKDQLKTPAKDARPQTEDVTATKGLEFEDFYIKRELMMGIFEAGFEKPSPIQEETIPVALTGRDILARAKNGTGKTAAFVIPTLERINPKSTKTQALILVPTRELALQTSHVCKTLGKHLGINVMVTTGGTGLMDDIIRLNDAVHILVGTPGRVLDLASKGVADLSECPTFVMDEADKLLSPEFTPVIEQLLSFHPKDRQVMLFSATFPLIVKSFKDKHMRNPYEINLMDELTLRGITQYYAFVEEKQKVHCLNTLFSKLQINQSIIFCNSTNRVELLAKKITELGYSCFYSHARMLQQHRNRVFHDFRNGVCRNLVCSDLLTRGIDIQAVNVVINFDFPKNAETYLHRIGRSGRFGHLGLAINLINWDDRFNLYKIEQELGTEIQPIPQNIDKKLYVYDSPDTIPRPISNPSQPPQATGMPSGQHIGDRRHNNHPNGGHYQYNRGRGSYRGGRGQGPRRNVQHDQNRYNASQGQHQSGKSQAAPVS</sequence>
<accession>Q0CBE1</accession>
<proteinExistence type="inferred from homology"/>
<feature type="chain" id="PRO_0000282463" description="ATP-dependent RNA helicase dhh1">
    <location>
        <begin position="1"/>
        <end position="509"/>
    </location>
</feature>
<feature type="domain" description="Helicase ATP-binding" evidence="2">
    <location>
        <begin position="78"/>
        <end position="248"/>
    </location>
</feature>
<feature type="domain" description="Helicase C-terminal" evidence="3">
    <location>
        <begin position="258"/>
        <end position="418"/>
    </location>
</feature>
<feature type="region of interest" description="Disordered" evidence="4">
    <location>
        <begin position="1"/>
        <end position="40"/>
    </location>
</feature>
<feature type="region of interest" description="Disordered" evidence="4">
    <location>
        <begin position="422"/>
        <end position="509"/>
    </location>
</feature>
<feature type="short sequence motif" description="Q motif">
    <location>
        <begin position="47"/>
        <end position="75"/>
    </location>
</feature>
<feature type="short sequence motif" description="DEAD box">
    <location>
        <begin position="196"/>
        <end position="199"/>
    </location>
</feature>
<feature type="compositionally biased region" description="Polar residues" evidence="4">
    <location>
        <begin position="7"/>
        <end position="16"/>
    </location>
</feature>
<feature type="compositionally biased region" description="Basic and acidic residues" evidence="4">
    <location>
        <begin position="19"/>
        <end position="38"/>
    </location>
</feature>
<feature type="compositionally biased region" description="Polar residues" evidence="4">
    <location>
        <begin position="432"/>
        <end position="444"/>
    </location>
</feature>
<feature type="compositionally biased region" description="Polar residues" evidence="4">
    <location>
        <begin position="490"/>
        <end position="503"/>
    </location>
</feature>
<feature type="binding site" evidence="2">
    <location>
        <begin position="91"/>
        <end position="98"/>
    </location>
    <ligand>
        <name>ATP</name>
        <dbReference type="ChEBI" id="CHEBI:30616"/>
    </ligand>
</feature>
<reference key="1">
    <citation type="submission" date="2005-09" db="EMBL/GenBank/DDBJ databases">
        <title>Annotation of the Aspergillus terreus NIH2624 genome.</title>
        <authorList>
            <person name="Birren B.W."/>
            <person name="Lander E.S."/>
            <person name="Galagan J.E."/>
            <person name="Nusbaum C."/>
            <person name="Devon K."/>
            <person name="Henn M."/>
            <person name="Ma L.-J."/>
            <person name="Jaffe D.B."/>
            <person name="Butler J."/>
            <person name="Alvarez P."/>
            <person name="Gnerre S."/>
            <person name="Grabherr M."/>
            <person name="Kleber M."/>
            <person name="Mauceli E.W."/>
            <person name="Brockman W."/>
            <person name="Rounsley S."/>
            <person name="Young S.K."/>
            <person name="LaButti K."/>
            <person name="Pushparaj V."/>
            <person name="DeCaprio D."/>
            <person name="Crawford M."/>
            <person name="Koehrsen M."/>
            <person name="Engels R."/>
            <person name="Montgomery P."/>
            <person name="Pearson M."/>
            <person name="Howarth C."/>
            <person name="Larson L."/>
            <person name="Luoma S."/>
            <person name="White J."/>
            <person name="Alvarado L."/>
            <person name="Kodira C.D."/>
            <person name="Zeng Q."/>
            <person name="Oleary S."/>
            <person name="Yandava C."/>
            <person name="Denning D.W."/>
            <person name="Nierman W.C."/>
            <person name="Milne T."/>
            <person name="Madden K."/>
        </authorList>
    </citation>
    <scope>NUCLEOTIDE SEQUENCE [LARGE SCALE GENOMIC DNA]</scope>
    <source>
        <strain>NIH 2624 / FGSC A1156</strain>
    </source>
</reference>
<protein>
    <recommendedName>
        <fullName>ATP-dependent RNA helicase dhh1</fullName>
        <ecNumber>3.6.4.13</ecNumber>
    </recommendedName>
</protein>
<dbReference type="EC" id="3.6.4.13"/>
<dbReference type="EMBL" id="CH476606">
    <property type="protein sequence ID" value="EAU31125.1"/>
    <property type="molecule type" value="Genomic_DNA"/>
</dbReference>
<dbReference type="RefSeq" id="XP_001217579.1">
    <property type="nucleotide sequence ID" value="XM_001217578.1"/>
</dbReference>
<dbReference type="SMR" id="Q0CBE1"/>
<dbReference type="STRING" id="341663.Q0CBE1"/>
<dbReference type="EnsemblFungi" id="EAU31125">
    <property type="protein sequence ID" value="EAU31125"/>
    <property type="gene ID" value="ATEG_08993"/>
</dbReference>
<dbReference type="GeneID" id="4323383"/>
<dbReference type="VEuPathDB" id="FungiDB:ATEG_08993"/>
<dbReference type="eggNOG" id="KOG0326">
    <property type="taxonomic scope" value="Eukaryota"/>
</dbReference>
<dbReference type="HOGENOM" id="CLU_003041_30_0_1"/>
<dbReference type="OMA" id="TYEDRHT"/>
<dbReference type="OrthoDB" id="10265785at2759"/>
<dbReference type="Proteomes" id="UP000007963">
    <property type="component" value="Unassembled WGS sequence"/>
</dbReference>
<dbReference type="GO" id="GO:0000932">
    <property type="term" value="C:P-body"/>
    <property type="evidence" value="ECO:0007669"/>
    <property type="project" value="UniProtKB-SubCell"/>
</dbReference>
<dbReference type="GO" id="GO:0005524">
    <property type="term" value="F:ATP binding"/>
    <property type="evidence" value="ECO:0007669"/>
    <property type="project" value="UniProtKB-KW"/>
</dbReference>
<dbReference type="GO" id="GO:0016887">
    <property type="term" value="F:ATP hydrolysis activity"/>
    <property type="evidence" value="ECO:0007669"/>
    <property type="project" value="RHEA"/>
</dbReference>
<dbReference type="GO" id="GO:0003723">
    <property type="term" value="F:RNA binding"/>
    <property type="evidence" value="ECO:0007669"/>
    <property type="project" value="UniProtKB-KW"/>
</dbReference>
<dbReference type="GO" id="GO:0003724">
    <property type="term" value="F:RNA helicase activity"/>
    <property type="evidence" value="ECO:0007669"/>
    <property type="project" value="UniProtKB-EC"/>
</dbReference>
<dbReference type="GO" id="GO:0006397">
    <property type="term" value="P:mRNA processing"/>
    <property type="evidence" value="ECO:0007669"/>
    <property type="project" value="UniProtKB-KW"/>
</dbReference>
<dbReference type="GO" id="GO:0051028">
    <property type="term" value="P:mRNA transport"/>
    <property type="evidence" value="ECO:0007669"/>
    <property type="project" value="UniProtKB-KW"/>
</dbReference>
<dbReference type="GO" id="GO:0006417">
    <property type="term" value="P:regulation of translation"/>
    <property type="evidence" value="ECO:0007669"/>
    <property type="project" value="UniProtKB-KW"/>
</dbReference>
<dbReference type="CDD" id="cd17940">
    <property type="entry name" value="DEADc_DDX6"/>
    <property type="match status" value="1"/>
</dbReference>
<dbReference type="CDD" id="cd18787">
    <property type="entry name" value="SF2_C_DEAD"/>
    <property type="match status" value="1"/>
</dbReference>
<dbReference type="FunFam" id="3.40.50.300:FF:000114">
    <property type="entry name" value="ATP-dependent RNA helicase DDX6"/>
    <property type="match status" value="1"/>
</dbReference>
<dbReference type="FunFam" id="3.40.50.300:FF:000364">
    <property type="entry name" value="ATP-dependent RNA helicase DDX6"/>
    <property type="match status" value="1"/>
</dbReference>
<dbReference type="Gene3D" id="3.40.50.300">
    <property type="entry name" value="P-loop containing nucleotide triphosphate hydrolases"/>
    <property type="match status" value="2"/>
</dbReference>
<dbReference type="InterPro" id="IPR011545">
    <property type="entry name" value="DEAD/DEAH_box_helicase_dom"/>
</dbReference>
<dbReference type="InterPro" id="IPR014001">
    <property type="entry name" value="Helicase_ATP-bd"/>
</dbReference>
<dbReference type="InterPro" id="IPR001650">
    <property type="entry name" value="Helicase_C-like"/>
</dbReference>
<dbReference type="InterPro" id="IPR027417">
    <property type="entry name" value="P-loop_NTPase"/>
</dbReference>
<dbReference type="InterPro" id="IPR000629">
    <property type="entry name" value="RNA-helicase_DEAD-box_CS"/>
</dbReference>
<dbReference type="InterPro" id="IPR014014">
    <property type="entry name" value="RNA_helicase_DEAD_Q_motif"/>
</dbReference>
<dbReference type="PANTHER" id="PTHR47960">
    <property type="entry name" value="DEAD-BOX ATP-DEPENDENT RNA HELICASE 50"/>
    <property type="match status" value="1"/>
</dbReference>
<dbReference type="Pfam" id="PF00270">
    <property type="entry name" value="DEAD"/>
    <property type="match status" value="1"/>
</dbReference>
<dbReference type="Pfam" id="PF00271">
    <property type="entry name" value="Helicase_C"/>
    <property type="match status" value="1"/>
</dbReference>
<dbReference type="SMART" id="SM00487">
    <property type="entry name" value="DEXDc"/>
    <property type="match status" value="1"/>
</dbReference>
<dbReference type="SMART" id="SM00490">
    <property type="entry name" value="HELICc"/>
    <property type="match status" value="1"/>
</dbReference>
<dbReference type="SUPFAM" id="SSF52540">
    <property type="entry name" value="P-loop containing nucleoside triphosphate hydrolases"/>
    <property type="match status" value="1"/>
</dbReference>
<dbReference type="PROSITE" id="PS00039">
    <property type="entry name" value="DEAD_ATP_HELICASE"/>
    <property type="match status" value="1"/>
</dbReference>
<dbReference type="PROSITE" id="PS51192">
    <property type="entry name" value="HELICASE_ATP_BIND_1"/>
    <property type="match status" value="1"/>
</dbReference>
<dbReference type="PROSITE" id="PS51194">
    <property type="entry name" value="HELICASE_CTER"/>
    <property type="match status" value="1"/>
</dbReference>
<dbReference type="PROSITE" id="PS51195">
    <property type="entry name" value="Q_MOTIF"/>
    <property type="match status" value="1"/>
</dbReference>
<organism>
    <name type="scientific">Aspergillus terreus (strain NIH 2624 / FGSC A1156)</name>
    <dbReference type="NCBI Taxonomy" id="341663"/>
    <lineage>
        <taxon>Eukaryota</taxon>
        <taxon>Fungi</taxon>
        <taxon>Dikarya</taxon>
        <taxon>Ascomycota</taxon>
        <taxon>Pezizomycotina</taxon>
        <taxon>Eurotiomycetes</taxon>
        <taxon>Eurotiomycetidae</taxon>
        <taxon>Eurotiales</taxon>
        <taxon>Aspergillaceae</taxon>
        <taxon>Aspergillus</taxon>
        <taxon>Aspergillus subgen. Circumdati</taxon>
    </lineage>
</organism>